<accession>Q68X72</accession>
<dbReference type="EC" id="5.3.1.-"/>
<dbReference type="EMBL" id="AE017197">
    <property type="protein sequence ID" value="AAU03770.1"/>
    <property type="molecule type" value="Genomic_DNA"/>
</dbReference>
<dbReference type="SMR" id="Q68X72"/>
<dbReference type="KEGG" id="rty:RT0290"/>
<dbReference type="eggNOG" id="COG0698">
    <property type="taxonomic scope" value="Bacteria"/>
</dbReference>
<dbReference type="HOGENOM" id="CLU_091396_4_1_5"/>
<dbReference type="OrthoDB" id="1778624at2"/>
<dbReference type="Proteomes" id="UP000000604">
    <property type="component" value="Chromosome"/>
</dbReference>
<dbReference type="GO" id="GO:0004751">
    <property type="term" value="F:ribose-5-phosphate isomerase activity"/>
    <property type="evidence" value="ECO:0007669"/>
    <property type="project" value="TreeGrafter"/>
</dbReference>
<dbReference type="GO" id="GO:0019316">
    <property type="term" value="P:D-allose catabolic process"/>
    <property type="evidence" value="ECO:0007669"/>
    <property type="project" value="TreeGrafter"/>
</dbReference>
<dbReference type="GO" id="GO:0009052">
    <property type="term" value="P:pentose-phosphate shunt, non-oxidative branch"/>
    <property type="evidence" value="ECO:0007669"/>
    <property type="project" value="TreeGrafter"/>
</dbReference>
<dbReference type="Gene3D" id="3.40.1400.10">
    <property type="entry name" value="Sugar-phosphate isomerase, RpiB/LacA/LacB"/>
    <property type="match status" value="1"/>
</dbReference>
<dbReference type="InterPro" id="IPR004785">
    <property type="entry name" value="RpiB"/>
</dbReference>
<dbReference type="InterPro" id="IPR003500">
    <property type="entry name" value="RpiB_LacA_LacB"/>
</dbReference>
<dbReference type="InterPro" id="IPR036569">
    <property type="entry name" value="RpiB_LacA_LacB_sf"/>
</dbReference>
<dbReference type="NCBIfam" id="NF004051">
    <property type="entry name" value="PRK05571.1"/>
    <property type="match status" value="1"/>
</dbReference>
<dbReference type="NCBIfam" id="TIGR01120">
    <property type="entry name" value="rpiB"/>
    <property type="match status" value="1"/>
</dbReference>
<dbReference type="NCBIfam" id="TIGR00689">
    <property type="entry name" value="rpiB_lacA_lacB"/>
    <property type="match status" value="1"/>
</dbReference>
<dbReference type="PANTHER" id="PTHR30345:SF0">
    <property type="entry name" value="DNA DAMAGE-REPAIR_TOLERATION PROTEIN DRT102"/>
    <property type="match status" value="1"/>
</dbReference>
<dbReference type="PANTHER" id="PTHR30345">
    <property type="entry name" value="RIBOSE-5-PHOSPHATE ISOMERASE B"/>
    <property type="match status" value="1"/>
</dbReference>
<dbReference type="Pfam" id="PF02502">
    <property type="entry name" value="LacAB_rpiB"/>
    <property type="match status" value="1"/>
</dbReference>
<dbReference type="PIRSF" id="PIRSF005384">
    <property type="entry name" value="RpiB_LacA_B"/>
    <property type="match status" value="1"/>
</dbReference>
<dbReference type="SUPFAM" id="SSF89623">
    <property type="entry name" value="Ribose/Galactose isomerase RpiB/AlsB"/>
    <property type="match status" value="1"/>
</dbReference>
<reference key="1">
    <citation type="journal article" date="2004" name="J. Bacteriol.">
        <title>Complete genome sequence of Rickettsia typhi and comparison with sequences of other Rickettsiae.</title>
        <authorList>
            <person name="McLeod M.P."/>
            <person name="Qin X."/>
            <person name="Karpathy S.E."/>
            <person name="Gioia J."/>
            <person name="Highlander S.K."/>
            <person name="Fox G.E."/>
            <person name="McNeill T.Z."/>
            <person name="Jiang H."/>
            <person name="Muzny D."/>
            <person name="Jacob L.S."/>
            <person name="Hawes A.C."/>
            <person name="Sodergren E."/>
            <person name="Gill R."/>
            <person name="Hume J."/>
            <person name="Morgan M."/>
            <person name="Fan G."/>
            <person name="Amin A.G."/>
            <person name="Gibbs R.A."/>
            <person name="Hong C."/>
            <person name="Yu X.-J."/>
            <person name="Walker D.H."/>
            <person name="Weinstock G.M."/>
        </authorList>
    </citation>
    <scope>NUCLEOTIDE SEQUENCE [LARGE SCALE GENOMIC DNA]</scope>
    <source>
        <strain>ATCC VR-144 / Wilmington</strain>
    </source>
</reference>
<name>Y290_RICTY</name>
<gene>
    <name type="ordered locus">RT0290</name>
</gene>
<feature type="chain" id="PRO_0000269489" description="Putative sugar phosphate isomerase RT0290">
    <location>
        <begin position="1"/>
        <end position="144"/>
    </location>
</feature>
<feature type="active site" description="Proton donor" evidence="1">
    <location>
        <position position="101"/>
    </location>
</feature>
<feature type="binding site" evidence="1">
    <location>
        <position position="12"/>
    </location>
    <ligand>
        <name>substrate</name>
    </ligand>
</feature>
<feature type="binding site" evidence="1">
    <location>
        <position position="135"/>
    </location>
    <ligand>
        <name>substrate</name>
    </ligand>
</feature>
<keyword id="KW-0413">Isomerase</keyword>
<proteinExistence type="inferred from homology"/>
<sequence>MKTYNIVIASDHSGYELKSKIINYLEQKCLNIYDCGTQDTQTVDYPDYAKKVVDIIIEKAAPIGILISDTGIGMSIAANRSSEIRAALCNDILTAENAKAHNDANILILGAKSVDNKIVFNIIDKFLTTKFEGGRHSTRLSKIK</sequence>
<organism>
    <name type="scientific">Rickettsia typhi (strain ATCC VR-144 / Wilmington)</name>
    <dbReference type="NCBI Taxonomy" id="257363"/>
    <lineage>
        <taxon>Bacteria</taxon>
        <taxon>Pseudomonadati</taxon>
        <taxon>Pseudomonadota</taxon>
        <taxon>Alphaproteobacteria</taxon>
        <taxon>Rickettsiales</taxon>
        <taxon>Rickettsiaceae</taxon>
        <taxon>Rickettsieae</taxon>
        <taxon>Rickettsia</taxon>
        <taxon>typhus group</taxon>
    </lineage>
</organism>
<evidence type="ECO:0000250" key="1"/>
<evidence type="ECO:0000305" key="2"/>
<comment type="similarity">
    <text evidence="2">Belongs to the LacAB/RpiB family.</text>
</comment>
<protein>
    <recommendedName>
        <fullName>Putative sugar phosphate isomerase RT0290</fullName>
        <ecNumber>5.3.1.-</ecNumber>
    </recommendedName>
</protein>